<dbReference type="EC" id="2.3.1.274" evidence="1"/>
<dbReference type="EMBL" id="CP001407">
    <property type="protein sequence ID" value="ACO29101.1"/>
    <property type="molecule type" value="Genomic_DNA"/>
</dbReference>
<dbReference type="RefSeq" id="WP_000684108.1">
    <property type="nucleotide sequence ID" value="NZ_CP009318.1"/>
</dbReference>
<dbReference type="SMR" id="C1EP77"/>
<dbReference type="GeneID" id="92799877"/>
<dbReference type="KEGG" id="bcx:BCA_3953"/>
<dbReference type="PATRIC" id="fig|572264.18.peg.3909"/>
<dbReference type="UniPathway" id="UPA00085"/>
<dbReference type="Proteomes" id="UP000002210">
    <property type="component" value="Chromosome"/>
</dbReference>
<dbReference type="GO" id="GO:0005737">
    <property type="term" value="C:cytoplasm"/>
    <property type="evidence" value="ECO:0007669"/>
    <property type="project" value="UniProtKB-SubCell"/>
</dbReference>
<dbReference type="GO" id="GO:0043811">
    <property type="term" value="F:phosphate:acyl-[acyl carrier protein] acyltransferase activity"/>
    <property type="evidence" value="ECO:0007669"/>
    <property type="project" value="UniProtKB-UniRule"/>
</dbReference>
<dbReference type="GO" id="GO:0006633">
    <property type="term" value="P:fatty acid biosynthetic process"/>
    <property type="evidence" value="ECO:0007669"/>
    <property type="project" value="UniProtKB-UniRule"/>
</dbReference>
<dbReference type="GO" id="GO:0008654">
    <property type="term" value="P:phospholipid biosynthetic process"/>
    <property type="evidence" value="ECO:0007669"/>
    <property type="project" value="UniProtKB-KW"/>
</dbReference>
<dbReference type="Gene3D" id="3.40.718.10">
    <property type="entry name" value="Isopropylmalate Dehydrogenase"/>
    <property type="match status" value="1"/>
</dbReference>
<dbReference type="HAMAP" id="MF_00019">
    <property type="entry name" value="PlsX"/>
    <property type="match status" value="1"/>
</dbReference>
<dbReference type="InterPro" id="IPR003664">
    <property type="entry name" value="FA_synthesis"/>
</dbReference>
<dbReference type="InterPro" id="IPR012281">
    <property type="entry name" value="Phospholipid_synth_PlsX-like"/>
</dbReference>
<dbReference type="NCBIfam" id="TIGR00182">
    <property type="entry name" value="plsX"/>
    <property type="match status" value="1"/>
</dbReference>
<dbReference type="PANTHER" id="PTHR30100">
    <property type="entry name" value="FATTY ACID/PHOSPHOLIPID SYNTHESIS PROTEIN PLSX"/>
    <property type="match status" value="1"/>
</dbReference>
<dbReference type="PANTHER" id="PTHR30100:SF1">
    <property type="entry name" value="PHOSPHATE ACYLTRANSFERASE"/>
    <property type="match status" value="1"/>
</dbReference>
<dbReference type="Pfam" id="PF02504">
    <property type="entry name" value="FA_synthesis"/>
    <property type="match status" value="1"/>
</dbReference>
<dbReference type="PIRSF" id="PIRSF002465">
    <property type="entry name" value="Phsphlp_syn_PlsX"/>
    <property type="match status" value="1"/>
</dbReference>
<dbReference type="SUPFAM" id="SSF53659">
    <property type="entry name" value="Isocitrate/Isopropylmalate dehydrogenase-like"/>
    <property type="match status" value="1"/>
</dbReference>
<name>PLSX_BACC3</name>
<sequence>MKIAIDAMGGDHAPKAVVLGAMKAIKEYSDLHITLVGKEEEIRQYLTSEERITILHTDEKIESTDEPVRAVRRKKQASMVLAAQQVKDGVADACISAGSTGALMAAGLFVVGRMEGIERPALSPTMPTVDGEGFVMLDVGANVDAKPIHLYQYAVMGSVYAEKVRGIKNPRVGLLNVGTEDGKGNELSKQVFAMLKDAPINFVGNVESRDLLQGVADVVVCDGFTGNVALKSLEGTALALFSMLKEQLMSSFTSKLAAAVLKPKLMVLKDKMDYSEYGGAALFGLKAPVIKAHGSSNDQSIFSAIRQTREMVAKEVIPTISSVMEKEPLQ</sequence>
<reference key="1">
    <citation type="submission" date="2009-02" db="EMBL/GenBank/DDBJ databases">
        <title>Genome sequence of Bacillus cereus 03BB102.</title>
        <authorList>
            <person name="Dodson R.J."/>
            <person name="Jackson P."/>
            <person name="Munk A.C."/>
            <person name="Brettin T."/>
            <person name="Bruce D."/>
            <person name="Detter C."/>
            <person name="Tapia R."/>
            <person name="Han C."/>
            <person name="Sutton G."/>
            <person name="Sims D."/>
        </authorList>
    </citation>
    <scope>NUCLEOTIDE SEQUENCE [LARGE SCALE GENOMIC DNA]</scope>
    <source>
        <strain>03BB102</strain>
    </source>
</reference>
<feature type="chain" id="PRO_1000193125" description="Phosphate acyltransferase">
    <location>
        <begin position="1"/>
        <end position="330"/>
    </location>
</feature>
<accession>C1EP77</accession>
<keyword id="KW-0963">Cytoplasm</keyword>
<keyword id="KW-0444">Lipid biosynthesis</keyword>
<keyword id="KW-0443">Lipid metabolism</keyword>
<keyword id="KW-0594">Phospholipid biosynthesis</keyword>
<keyword id="KW-1208">Phospholipid metabolism</keyword>
<keyword id="KW-0808">Transferase</keyword>
<evidence type="ECO:0000255" key="1">
    <source>
        <dbReference type="HAMAP-Rule" id="MF_00019"/>
    </source>
</evidence>
<proteinExistence type="inferred from homology"/>
<organism>
    <name type="scientific">Bacillus cereus (strain 03BB102)</name>
    <dbReference type="NCBI Taxonomy" id="572264"/>
    <lineage>
        <taxon>Bacteria</taxon>
        <taxon>Bacillati</taxon>
        <taxon>Bacillota</taxon>
        <taxon>Bacilli</taxon>
        <taxon>Bacillales</taxon>
        <taxon>Bacillaceae</taxon>
        <taxon>Bacillus</taxon>
        <taxon>Bacillus cereus group</taxon>
    </lineage>
</organism>
<comment type="function">
    <text evidence="1">Catalyzes the reversible formation of acyl-phosphate (acyl-PO(4)) from acyl-[acyl-carrier-protein] (acyl-ACP). This enzyme utilizes acyl-ACP as fatty acyl donor, but not acyl-CoA.</text>
</comment>
<comment type="catalytic activity">
    <reaction evidence="1">
        <text>a fatty acyl-[ACP] + phosphate = an acyl phosphate + holo-[ACP]</text>
        <dbReference type="Rhea" id="RHEA:42292"/>
        <dbReference type="Rhea" id="RHEA-COMP:9685"/>
        <dbReference type="Rhea" id="RHEA-COMP:14125"/>
        <dbReference type="ChEBI" id="CHEBI:43474"/>
        <dbReference type="ChEBI" id="CHEBI:59918"/>
        <dbReference type="ChEBI" id="CHEBI:64479"/>
        <dbReference type="ChEBI" id="CHEBI:138651"/>
        <dbReference type="EC" id="2.3.1.274"/>
    </reaction>
</comment>
<comment type="pathway">
    <text evidence="1">Lipid metabolism; phospholipid metabolism.</text>
</comment>
<comment type="subunit">
    <text evidence="1">Homodimer. Probably interacts with PlsY.</text>
</comment>
<comment type="subcellular location">
    <subcellularLocation>
        <location evidence="1">Cytoplasm</location>
    </subcellularLocation>
    <text evidence="1">Associated with the membrane possibly through PlsY.</text>
</comment>
<comment type="similarity">
    <text evidence="1">Belongs to the PlsX family.</text>
</comment>
<gene>
    <name evidence="1" type="primary">plsX</name>
    <name type="ordered locus">BCA_3953</name>
</gene>
<protein>
    <recommendedName>
        <fullName evidence="1">Phosphate acyltransferase</fullName>
        <ecNumber evidence="1">2.3.1.274</ecNumber>
    </recommendedName>
    <alternativeName>
        <fullName evidence="1">Acyl-ACP phosphotransacylase</fullName>
    </alternativeName>
    <alternativeName>
        <fullName evidence="1">Acyl-[acyl-carrier-protein]--phosphate acyltransferase</fullName>
    </alternativeName>
    <alternativeName>
        <fullName evidence="1">Phosphate-acyl-ACP acyltransferase</fullName>
    </alternativeName>
</protein>